<name>YACG_RHIE6</name>
<dbReference type="EMBL" id="CP001074">
    <property type="protein sequence ID" value="ACE89651.1"/>
    <property type="molecule type" value="Genomic_DNA"/>
</dbReference>
<dbReference type="SMR" id="B3PNT8"/>
<dbReference type="KEGG" id="rec:RHECIAT_CH0000661"/>
<dbReference type="eggNOG" id="COG3024">
    <property type="taxonomic scope" value="Bacteria"/>
</dbReference>
<dbReference type="HOGENOM" id="CLU_178280_2_2_5"/>
<dbReference type="Proteomes" id="UP000008817">
    <property type="component" value="Chromosome"/>
</dbReference>
<dbReference type="GO" id="GO:0008657">
    <property type="term" value="F:DNA topoisomerase type II (double strand cut, ATP-hydrolyzing) inhibitor activity"/>
    <property type="evidence" value="ECO:0007669"/>
    <property type="project" value="UniProtKB-UniRule"/>
</dbReference>
<dbReference type="GO" id="GO:0008270">
    <property type="term" value="F:zinc ion binding"/>
    <property type="evidence" value="ECO:0007669"/>
    <property type="project" value="UniProtKB-UniRule"/>
</dbReference>
<dbReference type="GO" id="GO:0006355">
    <property type="term" value="P:regulation of DNA-templated transcription"/>
    <property type="evidence" value="ECO:0007669"/>
    <property type="project" value="InterPro"/>
</dbReference>
<dbReference type="Gene3D" id="3.30.50.10">
    <property type="entry name" value="Erythroid Transcription Factor GATA-1, subunit A"/>
    <property type="match status" value="1"/>
</dbReference>
<dbReference type="HAMAP" id="MF_00649">
    <property type="entry name" value="DNA_gyrase_inhibitor_YacG"/>
    <property type="match status" value="1"/>
</dbReference>
<dbReference type="InterPro" id="IPR005584">
    <property type="entry name" value="DNA_gyrase_inhibitor_YacG"/>
</dbReference>
<dbReference type="InterPro" id="IPR013088">
    <property type="entry name" value="Znf_NHR/GATA"/>
</dbReference>
<dbReference type="NCBIfam" id="NF002362">
    <property type="entry name" value="PRK01343.1"/>
    <property type="match status" value="1"/>
</dbReference>
<dbReference type="PANTHER" id="PTHR36150">
    <property type="entry name" value="DNA GYRASE INHIBITOR YACG"/>
    <property type="match status" value="1"/>
</dbReference>
<dbReference type="PANTHER" id="PTHR36150:SF1">
    <property type="entry name" value="DNA GYRASE INHIBITOR YACG"/>
    <property type="match status" value="1"/>
</dbReference>
<dbReference type="Pfam" id="PF03884">
    <property type="entry name" value="YacG"/>
    <property type="match status" value="1"/>
</dbReference>
<dbReference type="SUPFAM" id="SSF57716">
    <property type="entry name" value="Glucocorticoid receptor-like (DNA-binding domain)"/>
    <property type="match status" value="1"/>
</dbReference>
<gene>
    <name evidence="1" type="primary">yacG</name>
    <name type="ordered locus">RHECIAT_CH0000661</name>
</gene>
<organism>
    <name type="scientific">Rhizobium etli (strain CIAT 652)</name>
    <dbReference type="NCBI Taxonomy" id="491916"/>
    <lineage>
        <taxon>Bacteria</taxon>
        <taxon>Pseudomonadati</taxon>
        <taxon>Pseudomonadota</taxon>
        <taxon>Alphaproteobacteria</taxon>
        <taxon>Hyphomicrobiales</taxon>
        <taxon>Rhizobiaceae</taxon>
        <taxon>Rhizobium/Agrobacterium group</taxon>
        <taxon>Rhizobium</taxon>
    </lineage>
</organism>
<sequence length="70" mass="8055">MPEDRKAAAKVEPLRKTRPCPECGKPSNREHYPFCSNRCREVDLSRWLTGSYAIPVAEDETKADYPDEEN</sequence>
<evidence type="ECO:0000255" key="1">
    <source>
        <dbReference type="HAMAP-Rule" id="MF_00649"/>
    </source>
</evidence>
<accession>B3PNT8</accession>
<protein>
    <recommendedName>
        <fullName evidence="1">DNA gyrase inhibitor YacG</fullName>
    </recommendedName>
</protein>
<feature type="chain" id="PRO_1000200410" description="DNA gyrase inhibitor YacG">
    <location>
        <begin position="1"/>
        <end position="70"/>
    </location>
</feature>
<feature type="binding site" evidence="1">
    <location>
        <position position="20"/>
    </location>
    <ligand>
        <name>Zn(2+)</name>
        <dbReference type="ChEBI" id="CHEBI:29105"/>
    </ligand>
</feature>
<feature type="binding site" evidence="1">
    <location>
        <position position="23"/>
    </location>
    <ligand>
        <name>Zn(2+)</name>
        <dbReference type="ChEBI" id="CHEBI:29105"/>
    </ligand>
</feature>
<feature type="binding site" evidence="1">
    <location>
        <position position="35"/>
    </location>
    <ligand>
        <name>Zn(2+)</name>
        <dbReference type="ChEBI" id="CHEBI:29105"/>
    </ligand>
</feature>
<feature type="binding site" evidence="1">
    <location>
        <position position="39"/>
    </location>
    <ligand>
        <name>Zn(2+)</name>
        <dbReference type="ChEBI" id="CHEBI:29105"/>
    </ligand>
</feature>
<reference key="1">
    <citation type="journal article" date="2010" name="Appl. Environ. Microbiol.">
        <title>Conserved symbiotic plasmid DNA sequences in the multireplicon pangenomic structure of Rhizobium etli.</title>
        <authorList>
            <person name="Gonzalez V."/>
            <person name="Acosta J.L."/>
            <person name="Santamaria R.I."/>
            <person name="Bustos P."/>
            <person name="Fernandez J.L."/>
            <person name="Hernandez Gonzalez I.L."/>
            <person name="Diaz R."/>
            <person name="Flores M."/>
            <person name="Palacios R."/>
            <person name="Mora J."/>
            <person name="Davila G."/>
        </authorList>
    </citation>
    <scope>NUCLEOTIDE SEQUENCE [LARGE SCALE GENOMIC DNA]</scope>
    <source>
        <strain>CIAT 652</strain>
    </source>
</reference>
<keyword id="KW-0479">Metal-binding</keyword>
<keyword id="KW-0862">Zinc</keyword>
<proteinExistence type="inferred from homology"/>
<comment type="function">
    <text evidence="1">Inhibits all the catalytic activities of DNA gyrase by preventing its interaction with DNA. Acts by binding directly to the C-terminal domain of GyrB, which probably disrupts DNA binding by the gyrase.</text>
</comment>
<comment type="cofactor">
    <cofactor evidence="1">
        <name>Zn(2+)</name>
        <dbReference type="ChEBI" id="CHEBI:29105"/>
    </cofactor>
    <text evidence="1">Binds 1 zinc ion.</text>
</comment>
<comment type="subunit">
    <text evidence="1">Interacts with GyrB.</text>
</comment>
<comment type="similarity">
    <text evidence="1">Belongs to the DNA gyrase inhibitor YacG family.</text>
</comment>